<feature type="chain" id="PRO_1000166164" description="Large ribosomal subunit protein bL25">
    <location>
        <begin position="1"/>
        <end position="182"/>
    </location>
</feature>
<reference key="1">
    <citation type="submission" date="2004-12" db="EMBL/GenBank/DDBJ databases">
        <title>The genome sequence of Borrelia hermsii and Borrelia turicatae: comparative analysis of two agents of endemic N. America relapsing fever.</title>
        <authorList>
            <person name="Porcella S.F."/>
            <person name="Raffel S.J."/>
            <person name="Schrumpf M.E."/>
            <person name="Montgomery B."/>
            <person name="Smith T."/>
            <person name="Schwan T.G."/>
        </authorList>
    </citation>
    <scope>NUCLEOTIDE SEQUENCE [LARGE SCALE GENOMIC DNA]</scope>
    <source>
        <strain>91E135</strain>
    </source>
</reference>
<comment type="function">
    <text evidence="1">This is one of the proteins that binds to the 5S RNA in the ribosome where it forms part of the central protuberance.</text>
</comment>
<comment type="subunit">
    <text evidence="1">Part of the 50S ribosomal subunit; part of the 5S rRNA/L5/L18/L25 subcomplex. Contacts the 5S rRNA. Binds to the 5S rRNA independently of L5 and L18.</text>
</comment>
<comment type="similarity">
    <text evidence="1">Belongs to the bacterial ribosomal protein bL25 family. CTC subfamily.</text>
</comment>
<evidence type="ECO:0000255" key="1">
    <source>
        <dbReference type="HAMAP-Rule" id="MF_01334"/>
    </source>
</evidence>
<evidence type="ECO:0000305" key="2"/>
<keyword id="KW-1185">Reference proteome</keyword>
<keyword id="KW-0687">Ribonucleoprotein</keyword>
<keyword id="KW-0689">Ribosomal protein</keyword>
<keyword id="KW-0694">RNA-binding</keyword>
<keyword id="KW-0699">rRNA-binding</keyword>
<organism>
    <name type="scientific">Borrelia turicatae (strain 91E135)</name>
    <dbReference type="NCBI Taxonomy" id="314724"/>
    <lineage>
        <taxon>Bacteria</taxon>
        <taxon>Pseudomonadati</taxon>
        <taxon>Spirochaetota</taxon>
        <taxon>Spirochaetia</taxon>
        <taxon>Spirochaetales</taxon>
        <taxon>Borreliaceae</taxon>
        <taxon>Borrelia</taxon>
    </lineage>
</organism>
<proteinExistence type="inferred from homology"/>
<accession>A1R0K9</accession>
<name>RL25_BORT9</name>
<protein>
    <recommendedName>
        <fullName evidence="1">Large ribosomal subunit protein bL25</fullName>
    </recommendedName>
    <alternativeName>
        <fullName evidence="2">50S ribosomal protein L25</fullName>
    </alternativeName>
    <alternativeName>
        <fullName evidence="1">General stress protein CTC</fullName>
    </alternativeName>
</protein>
<gene>
    <name evidence="1" type="primary">rplY</name>
    <name evidence="1" type="synonym">ctc</name>
    <name type="ordered locus">BT0786</name>
</gene>
<dbReference type="EMBL" id="CP000049">
    <property type="protein sequence ID" value="AAX18100.1"/>
    <property type="molecule type" value="Genomic_DNA"/>
</dbReference>
<dbReference type="RefSeq" id="WP_011772718.1">
    <property type="nucleotide sequence ID" value="NC_008710.1"/>
</dbReference>
<dbReference type="SMR" id="A1R0K9"/>
<dbReference type="KEGG" id="btu:BT0786"/>
<dbReference type="eggNOG" id="COG1825">
    <property type="taxonomic scope" value="Bacteria"/>
</dbReference>
<dbReference type="HOGENOM" id="CLU_075939_2_0_12"/>
<dbReference type="Proteomes" id="UP000001205">
    <property type="component" value="Chromosome"/>
</dbReference>
<dbReference type="GO" id="GO:0022625">
    <property type="term" value="C:cytosolic large ribosomal subunit"/>
    <property type="evidence" value="ECO:0007669"/>
    <property type="project" value="TreeGrafter"/>
</dbReference>
<dbReference type="GO" id="GO:0008097">
    <property type="term" value="F:5S rRNA binding"/>
    <property type="evidence" value="ECO:0007669"/>
    <property type="project" value="InterPro"/>
</dbReference>
<dbReference type="GO" id="GO:0003735">
    <property type="term" value="F:structural constituent of ribosome"/>
    <property type="evidence" value="ECO:0007669"/>
    <property type="project" value="InterPro"/>
</dbReference>
<dbReference type="GO" id="GO:0006412">
    <property type="term" value="P:translation"/>
    <property type="evidence" value="ECO:0007669"/>
    <property type="project" value="UniProtKB-UniRule"/>
</dbReference>
<dbReference type="CDD" id="cd00495">
    <property type="entry name" value="Ribosomal_L25_TL5_CTC"/>
    <property type="match status" value="1"/>
</dbReference>
<dbReference type="Gene3D" id="2.170.120.20">
    <property type="entry name" value="Ribosomal protein L25, beta domain"/>
    <property type="match status" value="1"/>
</dbReference>
<dbReference type="Gene3D" id="2.40.240.10">
    <property type="entry name" value="Ribosomal Protein L25, Chain P"/>
    <property type="match status" value="1"/>
</dbReference>
<dbReference type="HAMAP" id="MF_01334">
    <property type="entry name" value="Ribosomal_bL25_CTC"/>
    <property type="match status" value="1"/>
</dbReference>
<dbReference type="InterPro" id="IPR020056">
    <property type="entry name" value="Rbsml_bL25/Gln-tRNA_synth_N"/>
</dbReference>
<dbReference type="InterPro" id="IPR011035">
    <property type="entry name" value="Ribosomal_bL25/Gln-tRNA_synth"/>
</dbReference>
<dbReference type="InterPro" id="IPR020057">
    <property type="entry name" value="Ribosomal_bL25_b-dom"/>
</dbReference>
<dbReference type="InterPro" id="IPR037121">
    <property type="entry name" value="Ribosomal_bL25_C"/>
</dbReference>
<dbReference type="InterPro" id="IPR001021">
    <property type="entry name" value="Ribosomal_bL25_long"/>
</dbReference>
<dbReference type="InterPro" id="IPR029751">
    <property type="entry name" value="Ribosomal_L25_dom"/>
</dbReference>
<dbReference type="InterPro" id="IPR020930">
    <property type="entry name" value="Ribosomal_uL5_bac-type"/>
</dbReference>
<dbReference type="NCBIfam" id="TIGR00731">
    <property type="entry name" value="bL25_bact_ctc"/>
    <property type="match status" value="1"/>
</dbReference>
<dbReference type="NCBIfam" id="NF004135">
    <property type="entry name" value="PRK05618.3-1"/>
    <property type="match status" value="1"/>
</dbReference>
<dbReference type="PANTHER" id="PTHR33284">
    <property type="entry name" value="RIBOSOMAL PROTEIN L25/GLN-TRNA SYNTHETASE, ANTI-CODON-BINDING DOMAIN-CONTAINING PROTEIN"/>
    <property type="match status" value="1"/>
</dbReference>
<dbReference type="PANTHER" id="PTHR33284:SF1">
    <property type="entry name" value="RIBOSOMAL PROTEIN L25_GLN-TRNA SYNTHETASE, ANTI-CODON-BINDING DOMAIN-CONTAINING PROTEIN"/>
    <property type="match status" value="1"/>
</dbReference>
<dbReference type="Pfam" id="PF01386">
    <property type="entry name" value="Ribosomal_L25p"/>
    <property type="match status" value="1"/>
</dbReference>
<dbReference type="Pfam" id="PF14693">
    <property type="entry name" value="Ribosomal_TL5_C"/>
    <property type="match status" value="1"/>
</dbReference>
<dbReference type="SUPFAM" id="SSF50715">
    <property type="entry name" value="Ribosomal protein L25-like"/>
    <property type="match status" value="1"/>
</dbReference>
<sequence length="182" mass="20655">MDSSRILKYESRLNFGSLCARRIRAKSEIPAVVYGKESDVLHIKIASNEFNKRFAKFTDNTVLILSDGKVERCVFIKDVSENITKGLIYHVDFYEVDRNRDIERYIAIKFVGASIGVKEGGTLSVLRTKIKVKALPLDLPEFVEVDLTPVKKGHQITFKDIVLPENVKLAEEDENLSILLVK</sequence>